<gene>
    <name evidence="1" type="primary">fadB</name>
    <name type="ordered locus">Shewmr7_0016</name>
</gene>
<feature type="chain" id="PRO_1000069580" description="Fatty acid oxidation complex subunit alpha">
    <location>
        <begin position="1"/>
        <end position="716"/>
    </location>
</feature>
<feature type="region of interest" description="Enoyl-CoA hydratase/isomerase" evidence="1">
    <location>
        <begin position="1"/>
        <end position="189"/>
    </location>
</feature>
<feature type="region of interest" description="3-hydroxyacyl-CoA dehydrogenase" evidence="1">
    <location>
        <begin position="311"/>
        <end position="716"/>
    </location>
</feature>
<feature type="active site" description="For 3-hydroxyacyl-CoA dehydrogenase activity" evidence="1">
    <location>
        <position position="450"/>
    </location>
</feature>
<feature type="binding site" evidence="1">
    <location>
        <position position="296"/>
    </location>
    <ligand>
        <name>substrate</name>
    </ligand>
</feature>
<feature type="binding site" evidence="1">
    <location>
        <position position="324"/>
    </location>
    <ligand>
        <name>NAD(+)</name>
        <dbReference type="ChEBI" id="CHEBI:57540"/>
    </ligand>
</feature>
<feature type="binding site" evidence="1">
    <location>
        <position position="343"/>
    </location>
    <ligand>
        <name>NAD(+)</name>
        <dbReference type="ChEBI" id="CHEBI:57540"/>
    </ligand>
</feature>
<feature type="binding site" evidence="1">
    <location>
        <begin position="400"/>
        <end position="402"/>
    </location>
    <ligand>
        <name>NAD(+)</name>
        <dbReference type="ChEBI" id="CHEBI:57540"/>
    </ligand>
</feature>
<feature type="binding site" evidence="1">
    <location>
        <position position="407"/>
    </location>
    <ligand>
        <name>NAD(+)</name>
        <dbReference type="ChEBI" id="CHEBI:57540"/>
    </ligand>
</feature>
<feature type="binding site" evidence="1">
    <location>
        <position position="429"/>
    </location>
    <ligand>
        <name>NAD(+)</name>
        <dbReference type="ChEBI" id="CHEBI:57540"/>
    </ligand>
</feature>
<feature type="binding site" evidence="1">
    <location>
        <position position="453"/>
    </location>
    <ligand>
        <name>NAD(+)</name>
        <dbReference type="ChEBI" id="CHEBI:57540"/>
    </ligand>
</feature>
<feature type="binding site" evidence="1">
    <location>
        <position position="500"/>
    </location>
    <ligand>
        <name>substrate</name>
    </ligand>
</feature>
<feature type="binding site" evidence="1">
    <location>
        <position position="660"/>
    </location>
    <ligand>
        <name>substrate</name>
    </ligand>
</feature>
<feature type="site" description="Important for catalytic activity" evidence="1">
    <location>
        <position position="119"/>
    </location>
</feature>
<feature type="site" description="Important for catalytic activity" evidence="1">
    <location>
        <position position="139"/>
    </location>
</feature>
<dbReference type="EC" id="4.2.1.17" evidence="1"/>
<dbReference type="EC" id="5.1.2.3" evidence="1"/>
<dbReference type="EC" id="5.3.3.8" evidence="1"/>
<dbReference type="EC" id="1.1.1.35" evidence="1"/>
<dbReference type="EMBL" id="CP000444">
    <property type="protein sequence ID" value="ABI41022.1"/>
    <property type="molecule type" value="Genomic_DNA"/>
</dbReference>
<dbReference type="SMR" id="Q0I0T3"/>
<dbReference type="KEGG" id="shm:Shewmr7_0016"/>
<dbReference type="HOGENOM" id="CLU_009834_16_3_6"/>
<dbReference type="UniPathway" id="UPA00659"/>
<dbReference type="GO" id="GO:0036125">
    <property type="term" value="C:fatty acid beta-oxidation multienzyme complex"/>
    <property type="evidence" value="ECO:0007669"/>
    <property type="project" value="InterPro"/>
</dbReference>
<dbReference type="GO" id="GO:0008692">
    <property type="term" value="F:3-hydroxybutyryl-CoA epimerase activity"/>
    <property type="evidence" value="ECO:0007669"/>
    <property type="project" value="UniProtKB-UniRule"/>
</dbReference>
<dbReference type="GO" id="GO:0004165">
    <property type="term" value="F:delta(3)-delta(2)-enoyl-CoA isomerase activity"/>
    <property type="evidence" value="ECO:0007669"/>
    <property type="project" value="UniProtKB-UniRule"/>
</dbReference>
<dbReference type="GO" id="GO:0004300">
    <property type="term" value="F:enoyl-CoA hydratase activity"/>
    <property type="evidence" value="ECO:0007669"/>
    <property type="project" value="UniProtKB-UniRule"/>
</dbReference>
<dbReference type="GO" id="GO:0016509">
    <property type="term" value="F:long-chain-3-hydroxyacyl-CoA dehydrogenase activity"/>
    <property type="evidence" value="ECO:0007669"/>
    <property type="project" value="TreeGrafter"/>
</dbReference>
<dbReference type="GO" id="GO:0070403">
    <property type="term" value="F:NAD+ binding"/>
    <property type="evidence" value="ECO:0007669"/>
    <property type="project" value="InterPro"/>
</dbReference>
<dbReference type="GO" id="GO:0006635">
    <property type="term" value="P:fatty acid beta-oxidation"/>
    <property type="evidence" value="ECO:0007669"/>
    <property type="project" value="UniProtKB-UniRule"/>
</dbReference>
<dbReference type="CDD" id="cd06558">
    <property type="entry name" value="crotonase-like"/>
    <property type="match status" value="1"/>
</dbReference>
<dbReference type="FunFam" id="1.10.1040.50:FF:000001">
    <property type="entry name" value="Fatty acid oxidation complex subunit alpha"/>
    <property type="match status" value="1"/>
</dbReference>
<dbReference type="FunFam" id="3.40.50.720:FF:000009">
    <property type="entry name" value="Fatty oxidation complex, alpha subunit"/>
    <property type="match status" value="1"/>
</dbReference>
<dbReference type="Gene3D" id="1.10.1040.50">
    <property type="match status" value="1"/>
</dbReference>
<dbReference type="Gene3D" id="3.90.226.10">
    <property type="entry name" value="2-enoyl-CoA Hydratase, Chain A, domain 1"/>
    <property type="match status" value="1"/>
</dbReference>
<dbReference type="Gene3D" id="3.40.50.720">
    <property type="entry name" value="NAD(P)-binding Rossmann-like Domain"/>
    <property type="match status" value="1"/>
</dbReference>
<dbReference type="HAMAP" id="MF_01621">
    <property type="entry name" value="FadB"/>
    <property type="match status" value="1"/>
</dbReference>
<dbReference type="InterPro" id="IPR006180">
    <property type="entry name" value="3-OHacyl-CoA_DH_CS"/>
</dbReference>
<dbReference type="InterPro" id="IPR006176">
    <property type="entry name" value="3-OHacyl-CoA_DH_NAD-bd"/>
</dbReference>
<dbReference type="InterPro" id="IPR006108">
    <property type="entry name" value="3HC_DH_C"/>
</dbReference>
<dbReference type="InterPro" id="IPR008927">
    <property type="entry name" value="6-PGluconate_DH-like_C_sf"/>
</dbReference>
<dbReference type="InterPro" id="IPR029045">
    <property type="entry name" value="ClpP/crotonase-like_dom_sf"/>
</dbReference>
<dbReference type="InterPro" id="IPR001753">
    <property type="entry name" value="Enoyl-CoA_hydra/iso"/>
</dbReference>
<dbReference type="InterPro" id="IPR050136">
    <property type="entry name" value="FA_oxidation_alpha_subunit"/>
</dbReference>
<dbReference type="InterPro" id="IPR012799">
    <property type="entry name" value="FadB"/>
</dbReference>
<dbReference type="InterPro" id="IPR036291">
    <property type="entry name" value="NAD(P)-bd_dom_sf"/>
</dbReference>
<dbReference type="NCBIfam" id="TIGR02437">
    <property type="entry name" value="FadB"/>
    <property type="match status" value="1"/>
</dbReference>
<dbReference type="NCBIfam" id="NF008727">
    <property type="entry name" value="PRK11730.1"/>
    <property type="match status" value="1"/>
</dbReference>
<dbReference type="PANTHER" id="PTHR43612">
    <property type="entry name" value="TRIFUNCTIONAL ENZYME SUBUNIT ALPHA"/>
    <property type="match status" value="1"/>
</dbReference>
<dbReference type="PANTHER" id="PTHR43612:SF3">
    <property type="entry name" value="TRIFUNCTIONAL ENZYME SUBUNIT ALPHA, MITOCHONDRIAL"/>
    <property type="match status" value="1"/>
</dbReference>
<dbReference type="Pfam" id="PF00725">
    <property type="entry name" value="3HCDH"/>
    <property type="match status" value="1"/>
</dbReference>
<dbReference type="Pfam" id="PF02737">
    <property type="entry name" value="3HCDH_N"/>
    <property type="match status" value="1"/>
</dbReference>
<dbReference type="Pfam" id="PF00378">
    <property type="entry name" value="ECH_1"/>
    <property type="match status" value="1"/>
</dbReference>
<dbReference type="SUPFAM" id="SSF48179">
    <property type="entry name" value="6-phosphogluconate dehydrogenase C-terminal domain-like"/>
    <property type="match status" value="2"/>
</dbReference>
<dbReference type="SUPFAM" id="SSF52096">
    <property type="entry name" value="ClpP/crotonase"/>
    <property type="match status" value="1"/>
</dbReference>
<dbReference type="SUPFAM" id="SSF51735">
    <property type="entry name" value="NAD(P)-binding Rossmann-fold domains"/>
    <property type="match status" value="1"/>
</dbReference>
<dbReference type="PROSITE" id="PS00067">
    <property type="entry name" value="3HCDH"/>
    <property type="match status" value="1"/>
</dbReference>
<name>FADB_SHESR</name>
<protein>
    <recommendedName>
        <fullName evidence="1">Fatty acid oxidation complex subunit alpha</fullName>
    </recommendedName>
    <domain>
        <recommendedName>
            <fullName evidence="1">Enoyl-CoA hydratase/Delta(3)-cis-Delta(2)-trans-enoyl-CoA isomerase/3-hydroxybutyryl-CoA epimerase</fullName>
            <ecNumber evidence="1">4.2.1.17</ecNumber>
            <ecNumber evidence="1">5.1.2.3</ecNumber>
            <ecNumber evidence="1">5.3.3.8</ecNumber>
        </recommendedName>
    </domain>
    <domain>
        <recommendedName>
            <fullName evidence="1">3-hydroxyacyl-CoA dehydrogenase</fullName>
            <ecNumber evidence="1">1.1.1.35</ecNumber>
        </recommendedName>
    </domain>
</protein>
<sequence>MIYQSPTIQVELLEDNIAKLCFNAPGSVNKFDRETLASLDAALDSIKQQSNIQALVLTSGKDTFIVGADITEFLGLFAQDDAVLLSWVEQANAVFNKLEDLPFPTASAIKGFALGGGCETILATDFRIADTTAKIGLPETKLGIIPGFGGTVRLPRVIGADNALEWITTGKDQRPEDALKVGAVDAVVAPEALEAAAIQMLKDAVAEKLDWQARRHRKMSPLTLPKLEAMMSFTTAKGMVFAVAGKHYPAPMAAVSVVEQAATKGRSDALQIEHQAFIKLAKTDVAKALIGIFLNDQLVKGKAKKAGKLAKDVKSAAVLGAGIMGGGIAYQSASKGTPIVMKDIAQPALDLGLGEAAKLLSAQVARGRSTPEKMAKVLNNITPALDYAPVNHADVVVEAVVEHPKVKAQVLAEVEQYVSEDAIIASNTSTISINLLAKSMKKPERFCGMHFFNPVHKMPLVEVIRGEHSSEETIASVVAYASKMGKTPIVVNDCPGFFVNRVLFPYFAGFNGLLAEGGDFAAIDKVMEKQFGWPMGPAYLLDVVGLDTGHHAQAVMAEGFPDRMGKSGNDAIDVMFENKRLGQKNGKGFYAYSVDSRGKPKKDVDPTSYELLKAAFGEQKAFDADEIIARTMIPMIIETVRCLEEGIVASPAEADMGLVYGLGFPPFRGGVFRYLDTMGVANFVALADKYAHLGGLYQVTDAMRALAANNGSYYQA</sequence>
<keyword id="KW-0276">Fatty acid metabolism</keyword>
<keyword id="KW-0413">Isomerase</keyword>
<keyword id="KW-0442">Lipid degradation</keyword>
<keyword id="KW-0443">Lipid metabolism</keyword>
<keyword id="KW-0456">Lyase</keyword>
<keyword id="KW-0511">Multifunctional enzyme</keyword>
<keyword id="KW-0520">NAD</keyword>
<keyword id="KW-0560">Oxidoreductase</keyword>
<evidence type="ECO:0000255" key="1">
    <source>
        <dbReference type="HAMAP-Rule" id="MF_01621"/>
    </source>
</evidence>
<accession>Q0I0T3</accession>
<organism>
    <name type="scientific">Shewanella sp. (strain MR-7)</name>
    <dbReference type="NCBI Taxonomy" id="60481"/>
    <lineage>
        <taxon>Bacteria</taxon>
        <taxon>Pseudomonadati</taxon>
        <taxon>Pseudomonadota</taxon>
        <taxon>Gammaproteobacteria</taxon>
        <taxon>Alteromonadales</taxon>
        <taxon>Shewanellaceae</taxon>
        <taxon>Shewanella</taxon>
    </lineage>
</organism>
<reference key="1">
    <citation type="submission" date="2006-08" db="EMBL/GenBank/DDBJ databases">
        <title>Complete sequence of chromosome 1 of Shewanella sp. MR-7.</title>
        <authorList>
            <person name="Copeland A."/>
            <person name="Lucas S."/>
            <person name="Lapidus A."/>
            <person name="Barry K."/>
            <person name="Detter J.C."/>
            <person name="Glavina del Rio T."/>
            <person name="Hammon N."/>
            <person name="Israni S."/>
            <person name="Dalin E."/>
            <person name="Tice H."/>
            <person name="Pitluck S."/>
            <person name="Kiss H."/>
            <person name="Brettin T."/>
            <person name="Bruce D."/>
            <person name="Han C."/>
            <person name="Tapia R."/>
            <person name="Gilna P."/>
            <person name="Schmutz J."/>
            <person name="Larimer F."/>
            <person name="Land M."/>
            <person name="Hauser L."/>
            <person name="Kyrpides N."/>
            <person name="Mikhailova N."/>
            <person name="Nealson K."/>
            <person name="Konstantinidis K."/>
            <person name="Klappenbach J."/>
            <person name="Tiedje J."/>
            <person name="Richardson P."/>
        </authorList>
    </citation>
    <scope>NUCLEOTIDE SEQUENCE [LARGE SCALE GENOMIC DNA]</scope>
    <source>
        <strain>MR-7</strain>
    </source>
</reference>
<proteinExistence type="inferred from homology"/>
<comment type="function">
    <text evidence="1">Involved in the aerobic and anaerobic degradation of long-chain fatty acids via beta-oxidation cycle. Catalyzes the formation of 3-oxoacyl-CoA from enoyl-CoA via L-3-hydroxyacyl-CoA. It can also use D-3-hydroxyacyl-CoA and cis-3-enoyl-CoA as substrate.</text>
</comment>
<comment type="catalytic activity">
    <reaction evidence="1">
        <text>a (3S)-3-hydroxyacyl-CoA + NAD(+) = a 3-oxoacyl-CoA + NADH + H(+)</text>
        <dbReference type="Rhea" id="RHEA:22432"/>
        <dbReference type="ChEBI" id="CHEBI:15378"/>
        <dbReference type="ChEBI" id="CHEBI:57318"/>
        <dbReference type="ChEBI" id="CHEBI:57540"/>
        <dbReference type="ChEBI" id="CHEBI:57945"/>
        <dbReference type="ChEBI" id="CHEBI:90726"/>
        <dbReference type="EC" id="1.1.1.35"/>
    </reaction>
</comment>
<comment type="catalytic activity">
    <reaction evidence="1">
        <text>a (3S)-3-hydroxyacyl-CoA = a (2E)-enoyl-CoA + H2O</text>
        <dbReference type="Rhea" id="RHEA:16105"/>
        <dbReference type="ChEBI" id="CHEBI:15377"/>
        <dbReference type="ChEBI" id="CHEBI:57318"/>
        <dbReference type="ChEBI" id="CHEBI:58856"/>
        <dbReference type="EC" id="4.2.1.17"/>
    </reaction>
</comment>
<comment type="catalytic activity">
    <reaction evidence="1">
        <text>a 4-saturated-(3S)-3-hydroxyacyl-CoA = a (3E)-enoyl-CoA + H2O</text>
        <dbReference type="Rhea" id="RHEA:20724"/>
        <dbReference type="ChEBI" id="CHEBI:15377"/>
        <dbReference type="ChEBI" id="CHEBI:58521"/>
        <dbReference type="ChEBI" id="CHEBI:137480"/>
        <dbReference type="EC" id="4.2.1.17"/>
    </reaction>
</comment>
<comment type="catalytic activity">
    <reaction evidence="1">
        <text>(3S)-3-hydroxybutanoyl-CoA = (3R)-3-hydroxybutanoyl-CoA</text>
        <dbReference type="Rhea" id="RHEA:21760"/>
        <dbReference type="ChEBI" id="CHEBI:57315"/>
        <dbReference type="ChEBI" id="CHEBI:57316"/>
        <dbReference type="EC" id="5.1.2.3"/>
    </reaction>
</comment>
<comment type="catalytic activity">
    <reaction evidence="1">
        <text>a (3Z)-enoyl-CoA = a 4-saturated (2E)-enoyl-CoA</text>
        <dbReference type="Rhea" id="RHEA:45900"/>
        <dbReference type="ChEBI" id="CHEBI:85097"/>
        <dbReference type="ChEBI" id="CHEBI:85489"/>
        <dbReference type="EC" id="5.3.3.8"/>
    </reaction>
</comment>
<comment type="catalytic activity">
    <reaction evidence="1">
        <text>a (3E)-enoyl-CoA = a 4-saturated (2E)-enoyl-CoA</text>
        <dbReference type="Rhea" id="RHEA:45228"/>
        <dbReference type="ChEBI" id="CHEBI:58521"/>
        <dbReference type="ChEBI" id="CHEBI:85097"/>
        <dbReference type="EC" id="5.3.3.8"/>
    </reaction>
</comment>
<comment type="pathway">
    <text evidence="1">Lipid metabolism; fatty acid beta-oxidation.</text>
</comment>
<comment type="subunit">
    <text evidence="1">Heterotetramer of two alpha chains (FadB) and two beta chains (FadA).</text>
</comment>
<comment type="similarity">
    <text evidence="1">In the N-terminal section; belongs to the enoyl-CoA hydratase/isomerase family.</text>
</comment>
<comment type="similarity">
    <text evidence="1">In the C-terminal section; belongs to the 3-hydroxyacyl-CoA dehydrogenase family.</text>
</comment>